<comment type="function">
    <text evidence="2">Alkaline phosphatase that can hydrolyze various phosphate compounds.</text>
</comment>
<comment type="catalytic activity">
    <reaction evidence="2 4">
        <text>a phosphate monoester + H2O = an alcohol + phosphate</text>
        <dbReference type="Rhea" id="RHEA:15017"/>
        <dbReference type="ChEBI" id="CHEBI:15377"/>
        <dbReference type="ChEBI" id="CHEBI:30879"/>
        <dbReference type="ChEBI" id="CHEBI:43474"/>
        <dbReference type="ChEBI" id="CHEBI:67140"/>
        <dbReference type="EC" id="3.1.3.1"/>
    </reaction>
</comment>
<comment type="cofactor">
    <cofactor evidence="2">
        <name>Mg(2+)</name>
        <dbReference type="ChEBI" id="CHEBI:18420"/>
    </cofactor>
    <text evidence="2">Binds 1 Mg(2+) ion.</text>
</comment>
<comment type="cofactor">
    <cofactor evidence="2">
        <name>Zn(2+)</name>
        <dbReference type="ChEBI" id="CHEBI:29105"/>
    </cofactor>
    <text evidence="2">Binds 2 Zn(2+) ions.</text>
</comment>
<comment type="cofactor">
    <cofactor evidence="1">
        <name>Ca(2+)</name>
        <dbReference type="ChEBI" id="CHEBI:29108"/>
    </cofactor>
</comment>
<comment type="subunit">
    <text evidence="2">Homodimer.</text>
</comment>
<comment type="subcellular location">
    <subcellularLocation>
        <location evidence="2">Cell membrane</location>
        <topology evidence="2">Lipid-anchor</topology>
        <topology evidence="2">GPI-anchor</topology>
    </subcellularLocation>
</comment>
<comment type="tissue specificity">
    <text evidence="6">Intestine and thymus.</text>
</comment>
<comment type="miscellaneous">
    <text>In most mammals there are four different isozymes: placental (ALPP), germ cell (ALPG), intestinal (ALPI) and tissue non-specific (liver/bone/kidney) (ALPL/TNAP).</text>
</comment>
<comment type="similarity">
    <text evidence="7">Belongs to the alkaline phosphatase family.</text>
</comment>
<sequence>MQGPWVLLLLGLRLQLSLSVIPVEEENPAFWNKKAAEALDAAKKLQPIQTSAKNLIIFLGDGMGVPTVTATRILKGQLEGHLGPETPLAMDRFPYMALSKTYSVDRQVPDSASTATAYLCGVKTNYKTIGLSAAARFDQCNTTFGNEVFSVMYRAKKAGKSVGVVTTTRVQHASPSGTYVHTVNRNWYGDADMPASALREGCKDIATQLISNMDINVILGGGRKYMFPAGTPDPEYPNDANETGTRLDGRNLVQEWLSKHQGSQYVWNREQLIQKAQDPSVTYLMGLFEPVDTKFDIQRDPLMDPSLKDMTETAVKVLSRNPKGFYLFVEGGRIDRGHHLGTAYLALTEAVMFDLAIERASQLTSERDTLTIVTADHSHVFSFGGYTLRGTSIFGLAPLNALDGKPYTSILYGNGPGYVGTGERPNVTAAESSGSSYRRQAAVPVKSETHGGEDVAIFARGPQAHLVHGVQEQNYIAHVMASAGCLEPYTDCGLAPPADESQTTTTTRQTTITTTTTTTTTTTTPVHNSARSLGPATAPLALALLAGMLMLLLGAPAES</sequence>
<accession>P24822</accession>
<keyword id="KW-0106">Calcium</keyword>
<keyword id="KW-1003">Cell membrane</keyword>
<keyword id="KW-1015">Disulfide bond</keyword>
<keyword id="KW-0325">Glycoprotein</keyword>
<keyword id="KW-0336">GPI-anchor</keyword>
<keyword id="KW-0378">Hydrolase</keyword>
<keyword id="KW-0449">Lipoprotein</keyword>
<keyword id="KW-0460">Magnesium</keyword>
<keyword id="KW-0472">Membrane</keyword>
<keyword id="KW-0479">Metal-binding</keyword>
<keyword id="KW-1185">Reference proteome</keyword>
<keyword id="KW-0732">Signal</keyword>
<keyword id="KW-0862">Zinc</keyword>
<dbReference type="EC" id="3.1.3.1"/>
<dbReference type="EMBL" id="M61705">
    <property type="protein sequence ID" value="AAA37873.1"/>
    <property type="molecule type" value="Genomic_DNA"/>
</dbReference>
<dbReference type="CCDS" id="CCDS15127.1"/>
<dbReference type="PIR" id="B36307">
    <property type="entry name" value="B36307"/>
</dbReference>
<dbReference type="SMR" id="P24822"/>
<dbReference type="FunCoup" id="P24822">
    <property type="interactions" value="70"/>
</dbReference>
<dbReference type="STRING" id="10090.ENSMUSP00000037497"/>
<dbReference type="BindingDB" id="P24822"/>
<dbReference type="ChEMBL" id="CHEMBL3151"/>
<dbReference type="GlyCosmos" id="P24822">
    <property type="glycosylation" value="3 sites, No reported glycans"/>
</dbReference>
<dbReference type="GlyGen" id="P24822">
    <property type="glycosylation" value="3 sites"/>
</dbReference>
<dbReference type="iPTMnet" id="P24822"/>
<dbReference type="PhosphoSitePlus" id="P24822"/>
<dbReference type="PaxDb" id="10090-ENSMUSP00000037497"/>
<dbReference type="PeptideAtlas" id="P24822"/>
<dbReference type="ProteomicsDB" id="291780"/>
<dbReference type="AGR" id="MGI:87984"/>
<dbReference type="MGI" id="MGI:87984">
    <property type="gene designation" value="Akp3"/>
</dbReference>
<dbReference type="eggNOG" id="KOG4126">
    <property type="taxonomic scope" value="Eukaryota"/>
</dbReference>
<dbReference type="InParanoid" id="P24822"/>
<dbReference type="PhylomeDB" id="P24822"/>
<dbReference type="BRENDA" id="3.1.3.1">
    <property type="organism ID" value="3474"/>
</dbReference>
<dbReference type="Reactome" id="R-MMU-163125">
    <property type="pathway name" value="Post-translational modification: synthesis of GPI-anchored proteins"/>
</dbReference>
<dbReference type="Reactome" id="R-MMU-6811438">
    <property type="pathway name" value="Intra-Golgi traffic"/>
</dbReference>
<dbReference type="PRO" id="PR:P24822"/>
<dbReference type="Proteomes" id="UP000000589">
    <property type="component" value="Unplaced"/>
</dbReference>
<dbReference type="RNAct" id="P24822">
    <property type="molecule type" value="protein"/>
</dbReference>
<dbReference type="GO" id="GO:0005903">
    <property type="term" value="C:brush border"/>
    <property type="evidence" value="ECO:0000314"/>
    <property type="project" value="UniProtKB"/>
</dbReference>
<dbReference type="GO" id="GO:0005886">
    <property type="term" value="C:plasma membrane"/>
    <property type="evidence" value="ECO:0007669"/>
    <property type="project" value="UniProtKB-SubCell"/>
</dbReference>
<dbReference type="GO" id="GO:0098552">
    <property type="term" value="C:side of membrane"/>
    <property type="evidence" value="ECO:0007669"/>
    <property type="project" value="UniProtKB-KW"/>
</dbReference>
<dbReference type="GO" id="GO:0004035">
    <property type="term" value="F:alkaline phosphatase activity"/>
    <property type="evidence" value="ECO:0000250"/>
    <property type="project" value="UniProtKB"/>
</dbReference>
<dbReference type="GO" id="GO:0000287">
    <property type="term" value="F:magnesium ion binding"/>
    <property type="evidence" value="ECO:0000250"/>
    <property type="project" value="UniProtKB"/>
</dbReference>
<dbReference type="GO" id="GO:0008270">
    <property type="term" value="F:zinc ion binding"/>
    <property type="evidence" value="ECO:0000250"/>
    <property type="project" value="UniProtKB"/>
</dbReference>
<dbReference type="GO" id="GO:0016311">
    <property type="term" value="P:dephosphorylation"/>
    <property type="evidence" value="ECO:0000250"/>
    <property type="project" value="UniProtKB"/>
</dbReference>
<dbReference type="GO" id="GO:0035264">
    <property type="term" value="P:multicellular organism growth"/>
    <property type="evidence" value="ECO:0000315"/>
    <property type="project" value="MGI"/>
</dbReference>
<dbReference type="GO" id="GO:0021915">
    <property type="term" value="P:neural tube development"/>
    <property type="evidence" value="ECO:0000315"/>
    <property type="project" value="MGI"/>
</dbReference>
<dbReference type="GO" id="GO:0022008">
    <property type="term" value="P:neurogenesis"/>
    <property type="evidence" value="ECO:0000315"/>
    <property type="project" value="MGI"/>
</dbReference>
<dbReference type="GO" id="GO:0036342">
    <property type="term" value="P:post-anal tail morphogenesis"/>
    <property type="evidence" value="ECO:0000315"/>
    <property type="project" value="MGI"/>
</dbReference>
<dbReference type="CDD" id="cd16012">
    <property type="entry name" value="ALP"/>
    <property type="match status" value="1"/>
</dbReference>
<dbReference type="FunFam" id="3.40.720.10:FF:000008">
    <property type="entry name" value="Alkaline phosphatase"/>
    <property type="match status" value="1"/>
</dbReference>
<dbReference type="Gene3D" id="3.40.720.10">
    <property type="entry name" value="Alkaline Phosphatase, subunit A"/>
    <property type="match status" value="1"/>
</dbReference>
<dbReference type="InterPro" id="IPR001952">
    <property type="entry name" value="Alkaline_phosphatase"/>
</dbReference>
<dbReference type="InterPro" id="IPR018299">
    <property type="entry name" value="Alkaline_phosphatase_AS"/>
</dbReference>
<dbReference type="InterPro" id="IPR017850">
    <property type="entry name" value="Alkaline_phosphatase_core_sf"/>
</dbReference>
<dbReference type="PANTHER" id="PTHR11596">
    <property type="entry name" value="ALKALINE PHOSPHATASE"/>
    <property type="match status" value="1"/>
</dbReference>
<dbReference type="PANTHER" id="PTHR11596:SF43">
    <property type="entry name" value="INTESTINAL-TYPE ALKALINE PHOSPHATASE"/>
    <property type="match status" value="1"/>
</dbReference>
<dbReference type="Pfam" id="PF00245">
    <property type="entry name" value="Alk_phosphatase"/>
    <property type="match status" value="1"/>
</dbReference>
<dbReference type="PRINTS" id="PR00113">
    <property type="entry name" value="ALKPHPHTASE"/>
</dbReference>
<dbReference type="SMART" id="SM00098">
    <property type="entry name" value="alkPPc"/>
    <property type="match status" value="1"/>
</dbReference>
<dbReference type="SUPFAM" id="SSF53649">
    <property type="entry name" value="Alkaline phosphatase-like"/>
    <property type="match status" value="1"/>
</dbReference>
<dbReference type="PROSITE" id="PS00123">
    <property type="entry name" value="ALKALINE_PHOSPHATASE"/>
    <property type="match status" value="1"/>
</dbReference>
<organism>
    <name type="scientific">Mus musculus</name>
    <name type="common">Mouse</name>
    <dbReference type="NCBI Taxonomy" id="10090"/>
    <lineage>
        <taxon>Eukaryota</taxon>
        <taxon>Metazoa</taxon>
        <taxon>Chordata</taxon>
        <taxon>Craniata</taxon>
        <taxon>Vertebrata</taxon>
        <taxon>Euteleostomi</taxon>
        <taxon>Mammalia</taxon>
        <taxon>Eutheria</taxon>
        <taxon>Euarchontoglires</taxon>
        <taxon>Glires</taxon>
        <taxon>Rodentia</taxon>
        <taxon>Myomorpha</taxon>
        <taxon>Muroidea</taxon>
        <taxon>Muridae</taxon>
        <taxon>Murinae</taxon>
        <taxon>Mus</taxon>
        <taxon>Mus</taxon>
    </lineage>
</organism>
<reference key="1">
    <citation type="journal article" date="1990" name="Genomics">
        <title>Genomic structure and comparison of mouse tissue-specific alkaline phosphatase genes.</title>
        <authorList>
            <person name="Manes T."/>
            <person name="Glade K."/>
            <person name="Ziomek C.A."/>
            <person name="Millan J.L."/>
        </authorList>
    </citation>
    <scope>NUCLEOTIDE SEQUENCE [GENOMIC DNA]</scope>
    <scope>TISSUE SPECIFICITY</scope>
</reference>
<proteinExistence type="evidence at transcript level"/>
<feature type="signal peptide" evidence="3">
    <location>
        <begin position="1"/>
        <end position="19"/>
    </location>
</feature>
<feature type="chain" id="PRO_0000024039" description="Intestinal-type alkaline phosphatase">
    <location>
        <begin position="20"/>
        <end position="528"/>
    </location>
</feature>
<feature type="propeptide" id="PRO_0000024040" description="Removed in mature form" evidence="3">
    <location>
        <begin position="529"/>
        <end position="559"/>
    </location>
</feature>
<feature type="region of interest" description="Disordered" evidence="5">
    <location>
        <begin position="496"/>
        <end position="531"/>
    </location>
</feature>
<feature type="compositionally biased region" description="Low complexity" evidence="5">
    <location>
        <begin position="503"/>
        <end position="524"/>
    </location>
</feature>
<feature type="active site" description="Phosphoserine intermediate" evidence="4">
    <location>
        <position position="111"/>
    </location>
</feature>
<feature type="binding site" evidence="2">
    <location>
        <position position="61"/>
    </location>
    <ligand>
        <name>Mg(2+)</name>
        <dbReference type="ChEBI" id="CHEBI:18420"/>
    </ligand>
</feature>
<feature type="binding site" evidence="2">
    <location>
        <position position="61"/>
    </location>
    <ligand>
        <name>Zn(2+)</name>
        <dbReference type="ChEBI" id="CHEBI:29105"/>
        <label>1</label>
    </ligand>
</feature>
<feature type="binding site" evidence="2">
    <location>
        <position position="111"/>
    </location>
    <ligand>
        <name>Zn(2+)</name>
        <dbReference type="ChEBI" id="CHEBI:29105"/>
        <label>1</label>
    </ligand>
</feature>
<feature type="binding site" evidence="2">
    <location>
        <position position="174"/>
    </location>
    <ligand>
        <name>Mg(2+)</name>
        <dbReference type="ChEBI" id="CHEBI:18420"/>
    </ligand>
</feature>
<feature type="binding site" evidence="1">
    <location>
        <position position="235"/>
    </location>
    <ligand>
        <name>Ca(2+)</name>
        <dbReference type="ChEBI" id="CHEBI:29108"/>
    </ligand>
</feature>
<feature type="binding site" evidence="1">
    <location>
        <position position="288"/>
    </location>
    <ligand>
        <name>Ca(2+)</name>
        <dbReference type="ChEBI" id="CHEBI:29108"/>
    </ligand>
</feature>
<feature type="binding site" evidence="1">
    <location>
        <position position="289"/>
    </location>
    <ligand>
        <name>Ca(2+)</name>
        <dbReference type="ChEBI" id="CHEBI:29108"/>
    </ligand>
</feature>
<feature type="binding site" evidence="1">
    <location>
        <position position="304"/>
    </location>
    <ligand>
        <name>Ca(2+)</name>
        <dbReference type="ChEBI" id="CHEBI:29108"/>
    </ligand>
</feature>
<feature type="binding site" evidence="2">
    <location>
        <position position="330"/>
    </location>
    <ligand>
        <name>Mg(2+)</name>
        <dbReference type="ChEBI" id="CHEBI:18420"/>
    </ligand>
</feature>
<feature type="binding site" evidence="2">
    <location>
        <position position="335"/>
    </location>
    <ligand>
        <name>Zn(2+)</name>
        <dbReference type="ChEBI" id="CHEBI:29105"/>
        <label>2</label>
    </ligand>
</feature>
<feature type="binding site" evidence="2">
    <location>
        <position position="339"/>
    </location>
    <ligand>
        <name>Zn(2+)</name>
        <dbReference type="ChEBI" id="CHEBI:29105"/>
        <label>2</label>
    </ligand>
</feature>
<feature type="binding site" evidence="2">
    <location>
        <position position="376"/>
    </location>
    <ligand>
        <name>Zn(2+)</name>
        <dbReference type="ChEBI" id="CHEBI:29105"/>
        <label>1</label>
    </ligand>
</feature>
<feature type="binding site" evidence="2">
    <location>
        <position position="377"/>
    </location>
    <ligand>
        <name>Zn(2+)</name>
        <dbReference type="ChEBI" id="CHEBI:29105"/>
        <label>1</label>
    </ligand>
</feature>
<feature type="binding site" evidence="2">
    <location>
        <position position="450"/>
    </location>
    <ligand>
        <name>Zn(2+)</name>
        <dbReference type="ChEBI" id="CHEBI:29105"/>
        <label>2</label>
    </ligand>
</feature>
<feature type="lipid moiety-binding region" description="GPI-anchor amidated asparagine" evidence="3">
    <location>
        <position position="528"/>
    </location>
</feature>
<feature type="glycosylation site" description="N-linked (GlcNAc...) asparagine" evidence="3">
    <location>
        <position position="141"/>
    </location>
</feature>
<feature type="glycosylation site" description="N-linked (GlcNAc...) asparagine" evidence="3">
    <location>
        <position position="241"/>
    </location>
</feature>
<feature type="glycosylation site" description="N-linked (GlcNAc...) asparagine" evidence="3">
    <location>
        <position position="426"/>
    </location>
</feature>
<feature type="disulfide bond" evidence="2">
    <location>
        <begin position="140"/>
        <end position="202"/>
    </location>
</feature>
<feature type="disulfide bond" evidence="2">
    <location>
        <begin position="485"/>
        <end position="492"/>
    </location>
</feature>
<gene>
    <name type="primary">Iap</name>
    <name type="synonym">Akp-3</name>
    <name type="synonym">Akp3</name>
</gene>
<protein>
    <recommendedName>
        <fullName>Intestinal-type alkaline phosphatase</fullName>
        <shortName>IAP</shortName>
        <shortName>Intestinal alkaline phosphatase</shortName>
        <ecNumber>3.1.3.1</ecNumber>
    </recommendedName>
    <alternativeName>
        <fullName>Alkaline phosphatase 3</fullName>
    </alternativeName>
</protein>
<evidence type="ECO:0000250" key="1">
    <source>
        <dbReference type="UniProtKB" id="P05186"/>
    </source>
</evidence>
<evidence type="ECO:0000250" key="2">
    <source>
        <dbReference type="UniProtKB" id="P15693"/>
    </source>
</evidence>
<evidence type="ECO:0000255" key="3"/>
<evidence type="ECO:0000255" key="4">
    <source>
        <dbReference type="PROSITE-ProRule" id="PRU10042"/>
    </source>
</evidence>
<evidence type="ECO:0000256" key="5">
    <source>
        <dbReference type="SAM" id="MobiDB-lite"/>
    </source>
</evidence>
<evidence type="ECO:0000269" key="6">
    <source>
    </source>
</evidence>
<evidence type="ECO:0000305" key="7"/>
<name>PPBI_MOUSE</name>